<proteinExistence type="inferred from homology"/>
<evidence type="ECO:0000255" key="1">
    <source>
        <dbReference type="HAMAP-Rule" id="MF_00006"/>
    </source>
</evidence>
<protein>
    <recommendedName>
        <fullName evidence="1">Argininosuccinate lyase</fullName>
        <shortName evidence="1">ASAL</shortName>
        <ecNumber evidence="1">4.3.2.1</ecNumber>
    </recommendedName>
    <alternativeName>
        <fullName evidence="1">Arginosuccinase</fullName>
    </alternativeName>
</protein>
<feature type="chain" id="PRO_1000201694" description="Argininosuccinate lyase">
    <location>
        <begin position="1"/>
        <end position="465"/>
    </location>
</feature>
<dbReference type="EC" id="4.3.2.1" evidence="1"/>
<dbReference type="EMBL" id="CP001114">
    <property type="protein sequence ID" value="ACO44876.1"/>
    <property type="molecule type" value="Genomic_DNA"/>
</dbReference>
<dbReference type="RefSeq" id="WP_012691999.1">
    <property type="nucleotide sequence ID" value="NC_012526.1"/>
</dbReference>
<dbReference type="SMR" id="C1CXS0"/>
<dbReference type="STRING" id="546414.Deide_00760"/>
<dbReference type="PaxDb" id="546414-Deide_00760"/>
<dbReference type="KEGG" id="ddr:Deide_00760"/>
<dbReference type="eggNOG" id="COG0165">
    <property type="taxonomic scope" value="Bacteria"/>
</dbReference>
<dbReference type="HOGENOM" id="CLU_027272_2_3_0"/>
<dbReference type="OrthoDB" id="9769623at2"/>
<dbReference type="UniPathway" id="UPA00068">
    <property type="reaction ID" value="UER00114"/>
</dbReference>
<dbReference type="Proteomes" id="UP000002208">
    <property type="component" value="Chromosome"/>
</dbReference>
<dbReference type="GO" id="GO:0005829">
    <property type="term" value="C:cytosol"/>
    <property type="evidence" value="ECO:0007669"/>
    <property type="project" value="TreeGrafter"/>
</dbReference>
<dbReference type="GO" id="GO:0004056">
    <property type="term" value="F:argininosuccinate lyase activity"/>
    <property type="evidence" value="ECO:0007669"/>
    <property type="project" value="UniProtKB-UniRule"/>
</dbReference>
<dbReference type="GO" id="GO:0042450">
    <property type="term" value="P:arginine biosynthetic process via ornithine"/>
    <property type="evidence" value="ECO:0007669"/>
    <property type="project" value="InterPro"/>
</dbReference>
<dbReference type="GO" id="GO:0006526">
    <property type="term" value="P:L-arginine biosynthetic process"/>
    <property type="evidence" value="ECO:0007669"/>
    <property type="project" value="UniProtKB-UniRule"/>
</dbReference>
<dbReference type="CDD" id="cd01359">
    <property type="entry name" value="Argininosuccinate_lyase"/>
    <property type="match status" value="1"/>
</dbReference>
<dbReference type="FunFam" id="1.10.275.10:FF:000002">
    <property type="entry name" value="Argininosuccinate lyase"/>
    <property type="match status" value="1"/>
</dbReference>
<dbReference type="FunFam" id="1.10.40.30:FF:000001">
    <property type="entry name" value="Argininosuccinate lyase"/>
    <property type="match status" value="1"/>
</dbReference>
<dbReference type="FunFam" id="1.20.200.10:FF:000015">
    <property type="entry name" value="argininosuccinate lyase isoform X2"/>
    <property type="match status" value="1"/>
</dbReference>
<dbReference type="Gene3D" id="1.10.40.30">
    <property type="entry name" value="Fumarase/aspartase (C-terminal domain)"/>
    <property type="match status" value="1"/>
</dbReference>
<dbReference type="Gene3D" id="1.20.200.10">
    <property type="entry name" value="Fumarase/aspartase (Central domain)"/>
    <property type="match status" value="1"/>
</dbReference>
<dbReference type="Gene3D" id="1.10.275.10">
    <property type="entry name" value="Fumarase/aspartase (N-terminal domain)"/>
    <property type="match status" value="1"/>
</dbReference>
<dbReference type="HAMAP" id="MF_00006">
    <property type="entry name" value="Arg_succ_lyase"/>
    <property type="match status" value="1"/>
</dbReference>
<dbReference type="InterPro" id="IPR029419">
    <property type="entry name" value="Arg_succ_lyase_C"/>
</dbReference>
<dbReference type="InterPro" id="IPR009049">
    <property type="entry name" value="Argininosuccinate_lyase"/>
</dbReference>
<dbReference type="InterPro" id="IPR024083">
    <property type="entry name" value="Fumarase/histidase_N"/>
</dbReference>
<dbReference type="InterPro" id="IPR020557">
    <property type="entry name" value="Fumarate_lyase_CS"/>
</dbReference>
<dbReference type="InterPro" id="IPR000362">
    <property type="entry name" value="Fumarate_lyase_fam"/>
</dbReference>
<dbReference type="InterPro" id="IPR022761">
    <property type="entry name" value="Fumarate_lyase_N"/>
</dbReference>
<dbReference type="InterPro" id="IPR008948">
    <property type="entry name" value="L-Aspartase-like"/>
</dbReference>
<dbReference type="NCBIfam" id="TIGR00838">
    <property type="entry name" value="argH"/>
    <property type="match status" value="1"/>
</dbReference>
<dbReference type="PANTHER" id="PTHR43814">
    <property type="entry name" value="ARGININOSUCCINATE LYASE"/>
    <property type="match status" value="1"/>
</dbReference>
<dbReference type="PANTHER" id="PTHR43814:SF1">
    <property type="entry name" value="ARGININOSUCCINATE LYASE"/>
    <property type="match status" value="1"/>
</dbReference>
<dbReference type="Pfam" id="PF14698">
    <property type="entry name" value="ASL_C2"/>
    <property type="match status" value="1"/>
</dbReference>
<dbReference type="Pfam" id="PF00206">
    <property type="entry name" value="Lyase_1"/>
    <property type="match status" value="1"/>
</dbReference>
<dbReference type="PRINTS" id="PR00145">
    <property type="entry name" value="ARGSUCLYASE"/>
</dbReference>
<dbReference type="PRINTS" id="PR00149">
    <property type="entry name" value="FUMRATELYASE"/>
</dbReference>
<dbReference type="SUPFAM" id="SSF48557">
    <property type="entry name" value="L-aspartase-like"/>
    <property type="match status" value="1"/>
</dbReference>
<dbReference type="PROSITE" id="PS00163">
    <property type="entry name" value="FUMARATE_LYASES"/>
    <property type="match status" value="1"/>
</dbReference>
<name>ARLY_DEIDV</name>
<gene>
    <name evidence="1" type="primary">argH</name>
    <name type="ordered locus">Deide_00760</name>
</gene>
<sequence length="465" mass="50435">MTPSTQDKKLWGGRFAEATDGLVELFNASVGFDQRLAEQDIRGSLAHVAMLGQVGILTSEEVTQISDGLGAVLADIRAGTFEWRLDREDVHMNVEAALRDRIGPVAGKLHTARSRNDQVAVDFRLFTKEAALDLADKTRALRAVMLAEAEKHLAAEVILPGYTHLQVAQPILLAHWFMAYVAMLERDEGRFRDAAERMDESPLGSSALAGTPWPIDRHATATALGFARPTANSLDGVGSRDFALEFLSACAILSAHLSRLSEELIVYSTFEFGFLTLPDSHTTGSSIMPQKKNPDVSELARAKAGRVFGNLMGLLTVVKGTPLAYNKDLQEDKEGVFDSYDTLSIVLRLYTEMLPRTVWHAEVTRAAAARGYSTATDVADFLARQGVPFREAHEVVGGLVGLASRSGRQLWDLTDSELRAAHPLLGAEVAQALTVEQSVRARQSFGGTAPARVSEAIAQAREALG</sequence>
<reference key="1">
    <citation type="journal article" date="2009" name="PLoS Genet.">
        <title>Alliance of proteomics and genomics to unravel the specificities of Sahara bacterium Deinococcus deserti.</title>
        <authorList>
            <person name="de Groot A."/>
            <person name="Dulermo R."/>
            <person name="Ortet P."/>
            <person name="Blanchard L."/>
            <person name="Guerin P."/>
            <person name="Fernandez B."/>
            <person name="Vacherie B."/>
            <person name="Dossat C."/>
            <person name="Jolivet E."/>
            <person name="Siguier P."/>
            <person name="Chandler M."/>
            <person name="Barakat M."/>
            <person name="Dedieu A."/>
            <person name="Barbe V."/>
            <person name="Heulin T."/>
            <person name="Sommer S."/>
            <person name="Achouak W."/>
            <person name="Armengaud J."/>
        </authorList>
    </citation>
    <scope>NUCLEOTIDE SEQUENCE [LARGE SCALE GENOMIC DNA]</scope>
    <source>
        <strain>DSM 17065 / CIP 109153 / LMG 22923 / VCD115</strain>
    </source>
</reference>
<organism>
    <name type="scientific">Deinococcus deserti (strain DSM 17065 / CIP 109153 / LMG 22923 / VCD115)</name>
    <dbReference type="NCBI Taxonomy" id="546414"/>
    <lineage>
        <taxon>Bacteria</taxon>
        <taxon>Thermotogati</taxon>
        <taxon>Deinococcota</taxon>
        <taxon>Deinococci</taxon>
        <taxon>Deinococcales</taxon>
        <taxon>Deinococcaceae</taxon>
        <taxon>Deinococcus</taxon>
    </lineage>
</organism>
<keyword id="KW-0028">Amino-acid biosynthesis</keyword>
<keyword id="KW-0055">Arginine biosynthesis</keyword>
<keyword id="KW-0963">Cytoplasm</keyword>
<keyword id="KW-0456">Lyase</keyword>
<keyword id="KW-1185">Reference proteome</keyword>
<comment type="catalytic activity">
    <reaction evidence="1">
        <text>2-(N(omega)-L-arginino)succinate = fumarate + L-arginine</text>
        <dbReference type="Rhea" id="RHEA:24020"/>
        <dbReference type="ChEBI" id="CHEBI:29806"/>
        <dbReference type="ChEBI" id="CHEBI:32682"/>
        <dbReference type="ChEBI" id="CHEBI:57472"/>
        <dbReference type="EC" id="4.3.2.1"/>
    </reaction>
</comment>
<comment type="pathway">
    <text evidence="1">Amino-acid biosynthesis; L-arginine biosynthesis; L-arginine from L-ornithine and carbamoyl phosphate: step 3/3.</text>
</comment>
<comment type="subcellular location">
    <subcellularLocation>
        <location evidence="1">Cytoplasm</location>
    </subcellularLocation>
</comment>
<comment type="similarity">
    <text evidence="1">Belongs to the lyase 1 family. Argininosuccinate lyase subfamily.</text>
</comment>
<accession>C1CXS0</accession>